<keyword id="KW-0066">ATP synthesis</keyword>
<keyword id="KW-0067">ATP-binding</keyword>
<keyword id="KW-1003">Cell membrane</keyword>
<keyword id="KW-0139">CF(1)</keyword>
<keyword id="KW-0375">Hydrogen ion transport</keyword>
<keyword id="KW-0406">Ion transport</keyword>
<keyword id="KW-0472">Membrane</keyword>
<keyword id="KW-0547">Nucleotide-binding</keyword>
<keyword id="KW-1185">Reference proteome</keyword>
<keyword id="KW-1278">Translocase</keyword>
<keyword id="KW-0813">Transport</keyword>
<gene>
    <name evidence="1" type="primary">atpA</name>
    <name type="ordered locus">Dred_3152</name>
</gene>
<proteinExistence type="inferred from homology"/>
<organism>
    <name type="scientific">Desulforamulus reducens (strain ATCC BAA-1160 / DSM 100696 / MI-1)</name>
    <name type="common">Desulfotomaculum reducens</name>
    <dbReference type="NCBI Taxonomy" id="349161"/>
    <lineage>
        <taxon>Bacteria</taxon>
        <taxon>Bacillati</taxon>
        <taxon>Bacillota</taxon>
        <taxon>Clostridia</taxon>
        <taxon>Eubacteriales</taxon>
        <taxon>Peptococcaceae</taxon>
        <taxon>Desulforamulus</taxon>
    </lineage>
</organism>
<feature type="chain" id="PRO_1000086876" description="ATP synthase subunit alpha">
    <location>
        <begin position="1"/>
        <end position="501"/>
    </location>
</feature>
<feature type="binding site" evidence="1">
    <location>
        <begin position="169"/>
        <end position="176"/>
    </location>
    <ligand>
        <name>ATP</name>
        <dbReference type="ChEBI" id="CHEBI:30616"/>
    </ligand>
</feature>
<feature type="site" description="Required for activity" evidence="1">
    <location>
        <position position="362"/>
    </location>
</feature>
<accession>A4J9A1</accession>
<comment type="function">
    <text evidence="1">Produces ATP from ADP in the presence of a proton gradient across the membrane. The alpha chain is a regulatory subunit.</text>
</comment>
<comment type="catalytic activity">
    <reaction evidence="1">
        <text>ATP + H2O + 4 H(+)(in) = ADP + phosphate + 5 H(+)(out)</text>
        <dbReference type="Rhea" id="RHEA:57720"/>
        <dbReference type="ChEBI" id="CHEBI:15377"/>
        <dbReference type="ChEBI" id="CHEBI:15378"/>
        <dbReference type="ChEBI" id="CHEBI:30616"/>
        <dbReference type="ChEBI" id="CHEBI:43474"/>
        <dbReference type="ChEBI" id="CHEBI:456216"/>
        <dbReference type="EC" id="7.1.2.2"/>
    </reaction>
</comment>
<comment type="subunit">
    <text evidence="1">F-type ATPases have 2 components, CF(1) - the catalytic core - and CF(0) - the membrane proton channel. CF(1) has five subunits: alpha(3), beta(3), gamma(1), delta(1), epsilon(1). CF(0) has three main subunits: a(1), b(2) and c(9-12). The alpha and beta chains form an alternating ring which encloses part of the gamma chain. CF(1) is attached to CF(0) by a central stalk formed by the gamma and epsilon chains, while a peripheral stalk is formed by the delta and b chains.</text>
</comment>
<comment type="subcellular location">
    <subcellularLocation>
        <location evidence="1">Cell membrane</location>
        <topology evidence="1">Peripheral membrane protein</topology>
    </subcellularLocation>
</comment>
<comment type="similarity">
    <text evidence="1">Belongs to the ATPase alpha/beta chains family.</text>
</comment>
<dbReference type="EC" id="7.1.2.2" evidence="1"/>
<dbReference type="EMBL" id="CP000612">
    <property type="protein sequence ID" value="ABO51654.1"/>
    <property type="molecule type" value="Genomic_DNA"/>
</dbReference>
<dbReference type="RefSeq" id="WP_011879442.1">
    <property type="nucleotide sequence ID" value="NC_009253.1"/>
</dbReference>
<dbReference type="SMR" id="A4J9A1"/>
<dbReference type="STRING" id="349161.Dred_3152"/>
<dbReference type="KEGG" id="drm:Dred_3152"/>
<dbReference type="eggNOG" id="COG0056">
    <property type="taxonomic scope" value="Bacteria"/>
</dbReference>
<dbReference type="HOGENOM" id="CLU_010091_2_1_9"/>
<dbReference type="OrthoDB" id="9803053at2"/>
<dbReference type="Proteomes" id="UP000001556">
    <property type="component" value="Chromosome"/>
</dbReference>
<dbReference type="GO" id="GO:0005886">
    <property type="term" value="C:plasma membrane"/>
    <property type="evidence" value="ECO:0007669"/>
    <property type="project" value="UniProtKB-SubCell"/>
</dbReference>
<dbReference type="GO" id="GO:0045259">
    <property type="term" value="C:proton-transporting ATP synthase complex"/>
    <property type="evidence" value="ECO:0007669"/>
    <property type="project" value="UniProtKB-KW"/>
</dbReference>
<dbReference type="GO" id="GO:0043531">
    <property type="term" value="F:ADP binding"/>
    <property type="evidence" value="ECO:0007669"/>
    <property type="project" value="TreeGrafter"/>
</dbReference>
<dbReference type="GO" id="GO:0005524">
    <property type="term" value="F:ATP binding"/>
    <property type="evidence" value="ECO:0007669"/>
    <property type="project" value="UniProtKB-UniRule"/>
</dbReference>
<dbReference type="GO" id="GO:0046933">
    <property type="term" value="F:proton-transporting ATP synthase activity, rotational mechanism"/>
    <property type="evidence" value="ECO:0007669"/>
    <property type="project" value="UniProtKB-UniRule"/>
</dbReference>
<dbReference type="CDD" id="cd18113">
    <property type="entry name" value="ATP-synt_F1_alpha_C"/>
    <property type="match status" value="1"/>
</dbReference>
<dbReference type="CDD" id="cd18116">
    <property type="entry name" value="ATP-synt_F1_alpha_N"/>
    <property type="match status" value="1"/>
</dbReference>
<dbReference type="CDD" id="cd01132">
    <property type="entry name" value="F1-ATPase_alpha_CD"/>
    <property type="match status" value="1"/>
</dbReference>
<dbReference type="FunFam" id="1.20.150.20:FF:000001">
    <property type="entry name" value="ATP synthase subunit alpha"/>
    <property type="match status" value="1"/>
</dbReference>
<dbReference type="FunFam" id="2.40.30.20:FF:000001">
    <property type="entry name" value="ATP synthase subunit alpha"/>
    <property type="match status" value="1"/>
</dbReference>
<dbReference type="FunFam" id="3.40.50.300:FF:000002">
    <property type="entry name" value="ATP synthase subunit alpha"/>
    <property type="match status" value="1"/>
</dbReference>
<dbReference type="Gene3D" id="2.40.30.20">
    <property type="match status" value="1"/>
</dbReference>
<dbReference type="Gene3D" id="1.20.150.20">
    <property type="entry name" value="ATP synthase alpha/beta chain, C-terminal domain"/>
    <property type="match status" value="1"/>
</dbReference>
<dbReference type="Gene3D" id="3.40.50.300">
    <property type="entry name" value="P-loop containing nucleotide triphosphate hydrolases"/>
    <property type="match status" value="1"/>
</dbReference>
<dbReference type="HAMAP" id="MF_01346">
    <property type="entry name" value="ATP_synth_alpha_bact"/>
    <property type="match status" value="1"/>
</dbReference>
<dbReference type="InterPro" id="IPR023366">
    <property type="entry name" value="ATP_synth_asu-like_sf"/>
</dbReference>
<dbReference type="InterPro" id="IPR000793">
    <property type="entry name" value="ATP_synth_asu_C"/>
</dbReference>
<dbReference type="InterPro" id="IPR038376">
    <property type="entry name" value="ATP_synth_asu_C_sf"/>
</dbReference>
<dbReference type="InterPro" id="IPR033732">
    <property type="entry name" value="ATP_synth_F1_a_nt-bd_dom"/>
</dbReference>
<dbReference type="InterPro" id="IPR005294">
    <property type="entry name" value="ATP_synth_F1_asu"/>
</dbReference>
<dbReference type="InterPro" id="IPR004100">
    <property type="entry name" value="ATPase_F1/V1/A1_a/bsu_N"/>
</dbReference>
<dbReference type="InterPro" id="IPR036121">
    <property type="entry name" value="ATPase_F1/V1/A1_a/bsu_N_sf"/>
</dbReference>
<dbReference type="InterPro" id="IPR000194">
    <property type="entry name" value="ATPase_F1/V1/A1_a/bsu_nucl-bd"/>
</dbReference>
<dbReference type="InterPro" id="IPR027417">
    <property type="entry name" value="P-loop_NTPase"/>
</dbReference>
<dbReference type="NCBIfam" id="TIGR00962">
    <property type="entry name" value="atpA"/>
    <property type="match status" value="1"/>
</dbReference>
<dbReference type="NCBIfam" id="NF009884">
    <property type="entry name" value="PRK13343.1"/>
    <property type="match status" value="1"/>
</dbReference>
<dbReference type="PANTHER" id="PTHR48082">
    <property type="entry name" value="ATP SYNTHASE SUBUNIT ALPHA, MITOCHONDRIAL"/>
    <property type="match status" value="1"/>
</dbReference>
<dbReference type="PANTHER" id="PTHR48082:SF2">
    <property type="entry name" value="ATP SYNTHASE SUBUNIT ALPHA, MITOCHONDRIAL"/>
    <property type="match status" value="1"/>
</dbReference>
<dbReference type="Pfam" id="PF00006">
    <property type="entry name" value="ATP-synt_ab"/>
    <property type="match status" value="1"/>
</dbReference>
<dbReference type="Pfam" id="PF00306">
    <property type="entry name" value="ATP-synt_ab_C"/>
    <property type="match status" value="1"/>
</dbReference>
<dbReference type="Pfam" id="PF02874">
    <property type="entry name" value="ATP-synt_ab_N"/>
    <property type="match status" value="1"/>
</dbReference>
<dbReference type="PIRSF" id="PIRSF039088">
    <property type="entry name" value="F_ATPase_subunit_alpha"/>
    <property type="match status" value="1"/>
</dbReference>
<dbReference type="SUPFAM" id="SSF47917">
    <property type="entry name" value="C-terminal domain of alpha and beta subunits of F1 ATP synthase"/>
    <property type="match status" value="1"/>
</dbReference>
<dbReference type="SUPFAM" id="SSF50615">
    <property type="entry name" value="N-terminal domain of alpha and beta subunits of F1 ATP synthase"/>
    <property type="match status" value="1"/>
</dbReference>
<dbReference type="SUPFAM" id="SSF52540">
    <property type="entry name" value="P-loop containing nucleoside triphosphate hydrolases"/>
    <property type="match status" value="1"/>
</dbReference>
<sequence length="501" mass="54208">MNLRPEEISSIIRQQIDKYEAQVEVSDVGTVIQVGDGIARVYGLEDCMAAELLEFPGGTLGMALNLEEDNIGCVIMGPYTHIKEGDPVKRTGRIISVPVGDALIGRVVNPLGQPIDGKGPIKTEKYRPTERIAPGVITRKSVTVPLQTGLKAIDAMVPVGRGQRELIIGDRQTGKTAVAVDAIINQKGQDVICIYVAVGQKASTVAGVVQTLEAHGAMEYSIVVAANASEPAPLLYLAPYSGCAMGEEFMDNGKDVLIIYDDLSKQATAYREMSLLLRRPPGREAFPGDVFYLHSRLLERAARLAPEFGGGSITALPIIETQAGDVSAYIPTNVISITDGQIFLETDLFNSGQRPAISVGLSVSRVGGAAQIKAMKQVAGQLRLDLAQYRELAAFAQFGSDLDKATQARLNRGARTVQILKQGQYKPYPVEEQVVVIYTAVKGFLDDVELNKIGAFEDGFINFMRSNKADILKAIREQKEIKPETDAKLVAAIEEFKKTFA</sequence>
<name>ATPA_DESRM</name>
<reference key="1">
    <citation type="submission" date="2007-03" db="EMBL/GenBank/DDBJ databases">
        <title>Complete sequence of Desulfotomaculum reducens MI-1.</title>
        <authorList>
            <consortium name="US DOE Joint Genome Institute"/>
            <person name="Copeland A."/>
            <person name="Lucas S."/>
            <person name="Lapidus A."/>
            <person name="Barry K."/>
            <person name="Detter J.C."/>
            <person name="Glavina del Rio T."/>
            <person name="Hammon N."/>
            <person name="Israni S."/>
            <person name="Dalin E."/>
            <person name="Tice H."/>
            <person name="Pitluck S."/>
            <person name="Sims D."/>
            <person name="Brettin T."/>
            <person name="Bruce D."/>
            <person name="Han C."/>
            <person name="Tapia R."/>
            <person name="Schmutz J."/>
            <person name="Larimer F."/>
            <person name="Land M."/>
            <person name="Hauser L."/>
            <person name="Kyrpides N."/>
            <person name="Kim E."/>
            <person name="Tebo B.M."/>
            <person name="Richardson P."/>
        </authorList>
    </citation>
    <scope>NUCLEOTIDE SEQUENCE [LARGE SCALE GENOMIC DNA]</scope>
    <source>
        <strain>ATCC BAA-1160 / DSM 100696 / MI-1</strain>
    </source>
</reference>
<evidence type="ECO:0000255" key="1">
    <source>
        <dbReference type="HAMAP-Rule" id="MF_01346"/>
    </source>
</evidence>
<protein>
    <recommendedName>
        <fullName evidence="1">ATP synthase subunit alpha</fullName>
        <ecNumber evidence="1">7.1.2.2</ecNumber>
    </recommendedName>
    <alternativeName>
        <fullName evidence="1">ATP synthase F1 sector subunit alpha</fullName>
    </alternativeName>
    <alternativeName>
        <fullName evidence="1">F-ATPase subunit alpha</fullName>
    </alternativeName>
</protein>